<sequence length="615" mass="69646">MDRRSWLWRRKSSEKSPGETESTGSVSSHSERFSDDQRSQSPELNSKPVTREEEATADIKILTERLSAALLNVSLKEDLAKQHAKVAEEAVSGWEKAENEAAALKQQLDASTSKVSALEDRNSHLDSALKECVRQLWQGREEQNQKIEEAINNKCKEWETTKSQLEARIEELQARQDVTTSSVHEDLYPKLEALEKENSALKLQLLSKSEEVKIRTIERDLSTQAAESASKQQLEGIKKLTKLEAECRKLRVMVRRSDNSSDLKSSIDNQSDYSGRVSFSDNEMQSPSEKIIGKSSMATSVDIGLMDDFLEMEKLAALPHSEPGRKHSESNKELEKSNAHVNQLKHELKTSLRRISELEEKVEMVEVEKLQLEMALNGSKEQIEALQSRLKEIEGKLSEMKKLEAENQELELLLGESGKQMEDLQRQLNKAQVNLSELETRRAEKLELTMCLNGTKKQLETSQNRLKETERKLTELQTLLHLTKDAKEAAEDGLKAANGKTEAIESRLKDVEAEAESLILKIKSLEDVTEKERALSAKHNSKCNELQDEISKLKQELEHHQETEPAPNHIKGFELKQEKELAVAASKFAECQRTIASLGQRLQSLATFEDFLIES</sequence>
<gene>
    <name evidence="5" type="primary">FPP3</name>
    <name evidence="6" type="synonym">VETH1</name>
    <name evidence="8" type="ordered locus">At3g05270</name>
    <name evidence="9" type="ORF">T12H1.24</name>
</gene>
<reference key="1">
    <citation type="journal article" date="2000" name="Nature">
        <title>Sequence and analysis of chromosome 3 of the plant Arabidopsis thaliana.</title>
        <authorList>
            <person name="Salanoubat M."/>
            <person name="Lemcke K."/>
            <person name="Rieger M."/>
            <person name="Ansorge W."/>
            <person name="Unseld M."/>
            <person name="Fartmann B."/>
            <person name="Valle G."/>
            <person name="Bloecker H."/>
            <person name="Perez-Alonso M."/>
            <person name="Obermaier B."/>
            <person name="Delseny M."/>
            <person name="Boutry M."/>
            <person name="Grivell L.A."/>
            <person name="Mache R."/>
            <person name="Puigdomenech P."/>
            <person name="De Simone V."/>
            <person name="Choisne N."/>
            <person name="Artiguenave F."/>
            <person name="Robert C."/>
            <person name="Brottier P."/>
            <person name="Wincker P."/>
            <person name="Cattolico L."/>
            <person name="Weissenbach J."/>
            <person name="Saurin W."/>
            <person name="Quetier F."/>
            <person name="Schaefer M."/>
            <person name="Mueller-Auer S."/>
            <person name="Gabel C."/>
            <person name="Fuchs M."/>
            <person name="Benes V."/>
            <person name="Wurmbach E."/>
            <person name="Drzonek H."/>
            <person name="Erfle H."/>
            <person name="Jordan N."/>
            <person name="Bangert S."/>
            <person name="Wiedelmann R."/>
            <person name="Kranz H."/>
            <person name="Voss H."/>
            <person name="Holland R."/>
            <person name="Brandt P."/>
            <person name="Nyakatura G."/>
            <person name="Vezzi A."/>
            <person name="D'Angelo M."/>
            <person name="Pallavicini A."/>
            <person name="Toppo S."/>
            <person name="Simionati B."/>
            <person name="Conrad A."/>
            <person name="Hornischer K."/>
            <person name="Kauer G."/>
            <person name="Loehnert T.-H."/>
            <person name="Nordsiek G."/>
            <person name="Reichelt J."/>
            <person name="Scharfe M."/>
            <person name="Schoen O."/>
            <person name="Bargues M."/>
            <person name="Terol J."/>
            <person name="Climent J."/>
            <person name="Navarro P."/>
            <person name="Collado C."/>
            <person name="Perez-Perez A."/>
            <person name="Ottenwaelder B."/>
            <person name="Duchemin D."/>
            <person name="Cooke R."/>
            <person name="Laudie M."/>
            <person name="Berger-Llauro C."/>
            <person name="Purnelle B."/>
            <person name="Masuy D."/>
            <person name="de Haan M."/>
            <person name="Maarse A.C."/>
            <person name="Alcaraz J.-P."/>
            <person name="Cottet A."/>
            <person name="Casacuberta E."/>
            <person name="Monfort A."/>
            <person name="Argiriou A."/>
            <person name="Flores M."/>
            <person name="Liguori R."/>
            <person name="Vitale D."/>
            <person name="Mannhaupt G."/>
            <person name="Haase D."/>
            <person name="Schoof H."/>
            <person name="Rudd S."/>
            <person name="Zaccaria P."/>
            <person name="Mewes H.-W."/>
            <person name="Mayer K.F.X."/>
            <person name="Kaul S."/>
            <person name="Town C.D."/>
            <person name="Koo H.L."/>
            <person name="Tallon L.J."/>
            <person name="Jenkins J."/>
            <person name="Rooney T."/>
            <person name="Rizzo M."/>
            <person name="Walts A."/>
            <person name="Utterback T."/>
            <person name="Fujii C.Y."/>
            <person name="Shea T.P."/>
            <person name="Creasy T.H."/>
            <person name="Haas B."/>
            <person name="Maiti R."/>
            <person name="Wu D."/>
            <person name="Peterson J."/>
            <person name="Van Aken S."/>
            <person name="Pai G."/>
            <person name="Militscher J."/>
            <person name="Sellers P."/>
            <person name="Gill J.E."/>
            <person name="Feldblyum T.V."/>
            <person name="Preuss D."/>
            <person name="Lin X."/>
            <person name="Nierman W.C."/>
            <person name="Salzberg S.L."/>
            <person name="White O."/>
            <person name="Venter J.C."/>
            <person name="Fraser C.M."/>
            <person name="Kaneko T."/>
            <person name="Nakamura Y."/>
            <person name="Sato S."/>
            <person name="Kato T."/>
            <person name="Asamizu E."/>
            <person name="Sasamoto S."/>
            <person name="Kimura T."/>
            <person name="Idesawa K."/>
            <person name="Kawashima K."/>
            <person name="Kishida Y."/>
            <person name="Kiyokawa C."/>
            <person name="Kohara M."/>
            <person name="Matsumoto M."/>
            <person name="Matsuno A."/>
            <person name="Muraki A."/>
            <person name="Nakayama S."/>
            <person name="Nakazaki N."/>
            <person name="Shinpo S."/>
            <person name="Takeuchi C."/>
            <person name="Wada T."/>
            <person name="Watanabe A."/>
            <person name="Yamada M."/>
            <person name="Yasuda M."/>
            <person name="Tabata S."/>
        </authorList>
    </citation>
    <scope>NUCLEOTIDE SEQUENCE [LARGE SCALE GENOMIC DNA]</scope>
    <source>
        <strain>cv. Columbia</strain>
    </source>
</reference>
<reference key="2">
    <citation type="journal article" date="2017" name="Plant J.">
        <title>Araport11: a complete reannotation of the Arabidopsis thaliana reference genome.</title>
        <authorList>
            <person name="Cheng C.Y."/>
            <person name="Krishnakumar V."/>
            <person name="Chan A.P."/>
            <person name="Thibaud-Nissen F."/>
            <person name="Schobel S."/>
            <person name="Town C.D."/>
        </authorList>
    </citation>
    <scope>GENOME REANNOTATION</scope>
    <source>
        <strain>cv. Columbia</strain>
    </source>
</reference>
<reference key="3">
    <citation type="journal article" date="2002" name="BMC Genomics">
        <title>Four signature motifs define the first class of structurally related large coiled-coil proteins in plants.</title>
        <authorList>
            <person name="Gindullis F."/>
            <person name="Rose A."/>
            <person name="Patel S."/>
            <person name="Meier I."/>
        </authorList>
    </citation>
    <scope>GENE FAMILY</scope>
    <scope>NOMENCLATURE</scope>
</reference>
<reference key="4">
    <citation type="journal article" date="2015" name="Plant Cell Physiol.">
        <title>Novel coiled-coil proteins regulate exocyst association with cortical microtubules in xylem cells via the conserved oligomeric golgi-complex 2 protein.</title>
        <authorList>
            <person name="Oda Y."/>
            <person name="Iida Y."/>
            <person name="Nagashima Y."/>
            <person name="Sugiyama Y."/>
            <person name="Fukuda H."/>
        </authorList>
    </citation>
    <scope>FUNCTION</scope>
    <scope>INTERACTION WITH COG2</scope>
    <scope>TISSUE SPECIFICITY</scope>
    <scope>SUBCELLULAR LOCATION</scope>
</reference>
<comment type="function">
    <text evidence="4">Ensures, when in complex with COG2 and FPP2/VETH2, the correct secondary cell wall (SCW) deposition pattern by recruiting exocyst components to cortical microtubules in xylem cells during secondary cell wall deposition by recruiting EXO70A1.</text>
</comment>
<comment type="subunit">
    <text evidence="1 4">Interacts with WPP/MAF proteins (By similarity). Binds to COG2; this interaction promotes the association between cortical microtubules and EXO70A1 (PubMed:25541219).</text>
</comment>
<comment type="subcellular location">
    <subcellularLocation>
        <location evidence="4">Vesicle</location>
    </subcellularLocation>
    <text evidence="4">Present in vesicle-like small compartments which exhibit microtubule plus-end-directed and end-tracking dynamics.</text>
</comment>
<comment type="tissue specificity">
    <text evidence="4">Accumulates in preferentially xylem cells.</text>
</comment>
<comment type="similarity">
    <text evidence="7">Belongs to the FPP family.</text>
</comment>
<comment type="sequence caution" evidence="7">
    <conflict type="erroneous gene model prediction">
        <sequence resource="EMBL-CDS" id="AAF27033"/>
    </conflict>
</comment>
<proteinExistence type="evidence at protein level"/>
<feature type="chain" id="PRO_0000347201" description="Filament-like plant protein 3">
    <location>
        <begin position="1"/>
        <end position="615"/>
    </location>
</feature>
<feature type="region of interest" description="Disordered" evidence="3">
    <location>
        <begin position="1"/>
        <end position="55"/>
    </location>
</feature>
<feature type="region of interest" description="Disordered" evidence="3">
    <location>
        <begin position="258"/>
        <end position="289"/>
    </location>
</feature>
<feature type="region of interest" description="Disordered" evidence="3">
    <location>
        <begin position="319"/>
        <end position="343"/>
    </location>
</feature>
<feature type="coiled-coil region" evidence="2">
    <location>
        <begin position="87"/>
        <end position="121"/>
    </location>
</feature>
<feature type="coiled-coil region" evidence="2">
    <location>
        <begin position="148"/>
        <end position="211"/>
    </location>
</feature>
<feature type="coiled-coil region" evidence="2">
    <location>
        <begin position="327"/>
        <end position="563"/>
    </location>
</feature>
<feature type="compositionally biased region" description="Basic and acidic residues" evidence="3">
    <location>
        <begin position="1"/>
        <end position="18"/>
    </location>
</feature>
<feature type="compositionally biased region" description="Polar residues" evidence="3">
    <location>
        <begin position="19"/>
        <end position="28"/>
    </location>
</feature>
<feature type="compositionally biased region" description="Basic and acidic residues" evidence="3">
    <location>
        <begin position="29"/>
        <end position="38"/>
    </location>
</feature>
<feature type="compositionally biased region" description="Polar residues" evidence="3">
    <location>
        <begin position="39"/>
        <end position="48"/>
    </location>
</feature>
<feature type="compositionally biased region" description="Polar residues" evidence="3">
    <location>
        <begin position="262"/>
        <end position="288"/>
    </location>
</feature>
<feature type="compositionally biased region" description="Basic and acidic residues" evidence="3">
    <location>
        <begin position="322"/>
        <end position="343"/>
    </location>
</feature>
<organism>
    <name type="scientific">Arabidopsis thaliana</name>
    <name type="common">Mouse-ear cress</name>
    <dbReference type="NCBI Taxonomy" id="3702"/>
    <lineage>
        <taxon>Eukaryota</taxon>
        <taxon>Viridiplantae</taxon>
        <taxon>Streptophyta</taxon>
        <taxon>Embryophyta</taxon>
        <taxon>Tracheophyta</taxon>
        <taxon>Spermatophyta</taxon>
        <taxon>Magnoliopsida</taxon>
        <taxon>eudicotyledons</taxon>
        <taxon>Gunneridae</taxon>
        <taxon>Pentapetalae</taxon>
        <taxon>rosids</taxon>
        <taxon>malvids</taxon>
        <taxon>Brassicales</taxon>
        <taxon>Brassicaceae</taxon>
        <taxon>Camelineae</taxon>
        <taxon>Arabidopsis</taxon>
    </lineage>
</organism>
<protein>
    <recommendedName>
        <fullName evidence="5">Filament-like plant protein 3</fullName>
        <shortName evidence="5">AtFPP3</shortName>
    </recommendedName>
    <alternativeName>
        <fullName evidence="6">Protein VESICLE TETHERING 1</fullName>
    </alternativeName>
</protein>
<evidence type="ECO:0000250" key="1"/>
<evidence type="ECO:0000255" key="2"/>
<evidence type="ECO:0000256" key="3">
    <source>
        <dbReference type="SAM" id="MobiDB-lite"/>
    </source>
</evidence>
<evidence type="ECO:0000269" key="4">
    <source>
    </source>
</evidence>
<evidence type="ECO:0000303" key="5">
    <source>
    </source>
</evidence>
<evidence type="ECO:0000303" key="6">
    <source>
    </source>
</evidence>
<evidence type="ECO:0000305" key="7"/>
<evidence type="ECO:0000312" key="8">
    <source>
        <dbReference type="Araport" id="AT3G05270"/>
    </source>
</evidence>
<evidence type="ECO:0000312" key="9">
    <source>
        <dbReference type="EMBL" id="AAF27033.1"/>
    </source>
</evidence>
<keyword id="KW-0175">Coiled coil</keyword>
<keyword id="KW-1185">Reference proteome</keyword>
<accession>Q9MA92</accession>
<dbReference type="EMBL" id="AC009177">
    <property type="protein sequence ID" value="AAF27033.1"/>
    <property type="status" value="ALT_SEQ"/>
    <property type="molecule type" value="Genomic_DNA"/>
</dbReference>
<dbReference type="EMBL" id="CP002686">
    <property type="protein sequence ID" value="AEE74213.1"/>
    <property type="molecule type" value="Genomic_DNA"/>
</dbReference>
<dbReference type="EMBL" id="CP002686">
    <property type="protein sequence ID" value="AEE74214.1"/>
    <property type="molecule type" value="Genomic_DNA"/>
</dbReference>
<dbReference type="EMBL" id="CP002686">
    <property type="protein sequence ID" value="ANM64796.1"/>
    <property type="molecule type" value="Genomic_DNA"/>
</dbReference>
<dbReference type="RefSeq" id="NP_001118579.1">
    <property type="nucleotide sequence ID" value="NM_001125107.2"/>
</dbReference>
<dbReference type="RefSeq" id="NP_001326801.1">
    <property type="nucleotide sequence ID" value="NM_001337574.1"/>
</dbReference>
<dbReference type="RefSeq" id="NP_187178.2">
    <property type="nucleotide sequence ID" value="NM_111400.3"/>
</dbReference>
<dbReference type="SMR" id="Q9MA92"/>
<dbReference type="BioGRID" id="5026">
    <property type="interactions" value="1"/>
</dbReference>
<dbReference type="FunCoup" id="Q9MA92">
    <property type="interactions" value="589"/>
</dbReference>
<dbReference type="STRING" id="3702.Q9MA92"/>
<dbReference type="iPTMnet" id="Q9MA92"/>
<dbReference type="PaxDb" id="3702-AT3G05270.2"/>
<dbReference type="ProteomicsDB" id="229998"/>
<dbReference type="EnsemblPlants" id="AT3G05270.1">
    <property type="protein sequence ID" value="AT3G05270.1"/>
    <property type="gene ID" value="AT3G05270"/>
</dbReference>
<dbReference type="EnsemblPlants" id="AT3G05270.2">
    <property type="protein sequence ID" value="AT3G05270.2"/>
    <property type="gene ID" value="AT3G05270"/>
</dbReference>
<dbReference type="EnsemblPlants" id="AT3G05270.3">
    <property type="protein sequence ID" value="AT3G05270.3"/>
    <property type="gene ID" value="AT3G05270"/>
</dbReference>
<dbReference type="GeneID" id="819691"/>
<dbReference type="Gramene" id="AT3G05270.1">
    <property type="protein sequence ID" value="AT3G05270.1"/>
    <property type="gene ID" value="AT3G05270"/>
</dbReference>
<dbReference type="Gramene" id="AT3G05270.2">
    <property type="protein sequence ID" value="AT3G05270.2"/>
    <property type="gene ID" value="AT3G05270"/>
</dbReference>
<dbReference type="Gramene" id="AT3G05270.3">
    <property type="protein sequence ID" value="AT3G05270.3"/>
    <property type="gene ID" value="AT3G05270"/>
</dbReference>
<dbReference type="KEGG" id="ath:AT3G05270"/>
<dbReference type="Araport" id="AT3G05270"/>
<dbReference type="TAIR" id="AT3G05270">
    <property type="gene designation" value="VETH1"/>
</dbReference>
<dbReference type="eggNOG" id="ENOG502QQJ4">
    <property type="taxonomic scope" value="Eukaryota"/>
</dbReference>
<dbReference type="HOGENOM" id="CLU_012828_1_0_1"/>
<dbReference type="InParanoid" id="Q9MA92"/>
<dbReference type="OMA" id="PMESTCE"/>
<dbReference type="PhylomeDB" id="Q9MA92"/>
<dbReference type="PRO" id="PR:Q9MA92"/>
<dbReference type="Proteomes" id="UP000006548">
    <property type="component" value="Chromosome 3"/>
</dbReference>
<dbReference type="ExpressionAtlas" id="Q9MA92">
    <property type="expression patterns" value="baseline and differential"/>
</dbReference>
<dbReference type="GO" id="GO:0031410">
    <property type="term" value="C:cytoplasmic vesicle"/>
    <property type="evidence" value="ECO:0000314"/>
    <property type="project" value="TAIR"/>
</dbReference>
<dbReference type="GO" id="GO:0030674">
    <property type="term" value="F:protein-macromolecule adaptor activity"/>
    <property type="evidence" value="ECO:0000314"/>
    <property type="project" value="TAIR"/>
</dbReference>
<dbReference type="GO" id="GO:0060178">
    <property type="term" value="P:regulation of exocyst localization"/>
    <property type="evidence" value="ECO:0000314"/>
    <property type="project" value="TAIR"/>
</dbReference>
<dbReference type="InterPro" id="IPR008587">
    <property type="entry name" value="FPP_plant"/>
</dbReference>
<dbReference type="PANTHER" id="PTHR31580:SF49">
    <property type="entry name" value="FILAMENT-LIKE PLANT PROTEIN 3"/>
    <property type="match status" value="1"/>
</dbReference>
<dbReference type="PANTHER" id="PTHR31580">
    <property type="entry name" value="FILAMENT-LIKE PLANT PROTEIN 4"/>
    <property type="match status" value="1"/>
</dbReference>
<dbReference type="Pfam" id="PF05911">
    <property type="entry name" value="FPP"/>
    <property type="match status" value="3"/>
</dbReference>
<name>FPP3_ARATH</name>